<evidence type="ECO:0000255" key="1">
    <source>
        <dbReference type="HAMAP-Rule" id="MF_00715"/>
    </source>
</evidence>
<organism>
    <name type="scientific">Chromobacterium violaceum (strain ATCC 12472 / DSM 30191 / JCM 1249 / CCUG 213 / NBRC 12614 / NCIMB 9131 / NCTC 9757 / MK)</name>
    <dbReference type="NCBI Taxonomy" id="243365"/>
    <lineage>
        <taxon>Bacteria</taxon>
        <taxon>Pseudomonadati</taxon>
        <taxon>Pseudomonadota</taxon>
        <taxon>Betaproteobacteria</taxon>
        <taxon>Neisseriales</taxon>
        <taxon>Chromobacteriaceae</taxon>
        <taxon>Chromobacterium</taxon>
    </lineage>
</organism>
<dbReference type="EMBL" id="AE016825">
    <property type="protein sequence ID" value="AAQ58133.1"/>
    <property type="molecule type" value="Genomic_DNA"/>
</dbReference>
<dbReference type="SMR" id="Q7P0W0"/>
<dbReference type="STRING" id="243365.CV_0455"/>
<dbReference type="KEGG" id="cvi:CV_0455"/>
<dbReference type="eggNOG" id="COG2900">
    <property type="taxonomic scope" value="Bacteria"/>
</dbReference>
<dbReference type="HOGENOM" id="CLU_180796_3_1_4"/>
<dbReference type="OrthoDB" id="5297107at2"/>
<dbReference type="Proteomes" id="UP000001424">
    <property type="component" value="Chromosome"/>
</dbReference>
<dbReference type="Gene3D" id="1.20.5.300">
    <property type="match status" value="1"/>
</dbReference>
<dbReference type="HAMAP" id="MF_00715">
    <property type="entry name" value="SlyX"/>
    <property type="match status" value="1"/>
</dbReference>
<dbReference type="InterPro" id="IPR007236">
    <property type="entry name" value="SlyX"/>
</dbReference>
<dbReference type="NCBIfam" id="NF003316">
    <property type="entry name" value="PRK04325.1"/>
    <property type="match status" value="1"/>
</dbReference>
<dbReference type="PANTHER" id="PTHR36508">
    <property type="entry name" value="PROTEIN SLYX"/>
    <property type="match status" value="1"/>
</dbReference>
<dbReference type="PANTHER" id="PTHR36508:SF1">
    <property type="entry name" value="PROTEIN SLYX"/>
    <property type="match status" value="1"/>
</dbReference>
<dbReference type="Pfam" id="PF04102">
    <property type="entry name" value="SlyX"/>
    <property type="match status" value="1"/>
</dbReference>
<proteinExistence type="inferred from homology"/>
<reference key="1">
    <citation type="journal article" date="2003" name="Proc. Natl. Acad. Sci. U.S.A.">
        <title>The complete genome sequence of Chromobacterium violaceum reveals remarkable and exploitable bacterial adaptability.</title>
        <authorList>
            <person name="Vasconcelos A.T.R."/>
            <person name="de Almeida D.F."/>
            <person name="Hungria M."/>
            <person name="Guimaraes C.T."/>
            <person name="Antonio R.V."/>
            <person name="Almeida F.C."/>
            <person name="de Almeida L.G.P."/>
            <person name="de Almeida R."/>
            <person name="Alves-Gomes J.A."/>
            <person name="Andrade E.M."/>
            <person name="Araripe J."/>
            <person name="de Araujo M.F.F."/>
            <person name="Astolfi-Filho S."/>
            <person name="Azevedo V."/>
            <person name="Baptista A.J."/>
            <person name="Bataus L.A.M."/>
            <person name="Batista J.S."/>
            <person name="Belo A."/>
            <person name="van den Berg C."/>
            <person name="Bogo M."/>
            <person name="Bonatto S."/>
            <person name="Bordignon J."/>
            <person name="Brigido M.M."/>
            <person name="Brito C.A."/>
            <person name="Brocchi M."/>
            <person name="Burity H.A."/>
            <person name="Camargo A.A."/>
            <person name="Cardoso D.D.P."/>
            <person name="Carneiro N.P."/>
            <person name="Carraro D.M."/>
            <person name="Carvalho C.M.B."/>
            <person name="Cascardo J.C.M."/>
            <person name="Cavada B.S."/>
            <person name="Chueire L.M.O."/>
            <person name="Creczynski-Pasa T.B."/>
            <person name="Cunha-Junior N.C."/>
            <person name="Fagundes N."/>
            <person name="Falcao C.L."/>
            <person name="Fantinatti F."/>
            <person name="Farias I.P."/>
            <person name="Felipe M.S.S."/>
            <person name="Ferrari L.P."/>
            <person name="Ferro J.A."/>
            <person name="Ferro M.I.T."/>
            <person name="Franco G.R."/>
            <person name="Freitas N.S.A."/>
            <person name="Furlan L.R."/>
            <person name="Gazzinelli R.T."/>
            <person name="Gomes E.A."/>
            <person name="Goncalves P.R."/>
            <person name="Grangeiro T.B."/>
            <person name="Grattapaglia D."/>
            <person name="Grisard E.C."/>
            <person name="Hanna E.S."/>
            <person name="Jardim S.N."/>
            <person name="Laurino J."/>
            <person name="Leoi L.C.T."/>
            <person name="Lima L.F.A."/>
            <person name="Loureiro M.F."/>
            <person name="Lyra M.C.C.P."/>
            <person name="Madeira H.M.F."/>
            <person name="Manfio G.P."/>
            <person name="Maranhao A.Q."/>
            <person name="Martins W.S."/>
            <person name="di Mauro S.M.Z."/>
            <person name="de Medeiros S.R.B."/>
            <person name="Meissner R.V."/>
            <person name="Moreira M.A.M."/>
            <person name="Nascimento F.F."/>
            <person name="Nicolas M.F."/>
            <person name="Oliveira J.G."/>
            <person name="Oliveira S.C."/>
            <person name="Paixao R.F.C."/>
            <person name="Parente J.A."/>
            <person name="Pedrosa F.O."/>
            <person name="Pena S.D.J."/>
            <person name="Pereira J.O."/>
            <person name="Pereira M."/>
            <person name="Pinto L.S.R.C."/>
            <person name="Pinto L.S."/>
            <person name="Porto J.I.R."/>
            <person name="Potrich D.P."/>
            <person name="Ramalho-Neto C.E."/>
            <person name="Reis A.M.M."/>
            <person name="Rigo L.U."/>
            <person name="Rondinelli E."/>
            <person name="Santos E.B.P."/>
            <person name="Santos F.R."/>
            <person name="Schneider M.P.C."/>
            <person name="Seuanez H.N."/>
            <person name="Silva A.M.R."/>
            <person name="da Silva A.L.C."/>
            <person name="Silva D.W."/>
            <person name="Silva R."/>
            <person name="Simoes I.C."/>
            <person name="Simon D."/>
            <person name="Soares C.M.A."/>
            <person name="Soares R.B.A."/>
            <person name="Souza E.M."/>
            <person name="Souza K.R.L."/>
            <person name="Souza R.C."/>
            <person name="Steffens M.B.R."/>
            <person name="Steindel M."/>
            <person name="Teixeira S.R."/>
            <person name="Urmenyi T."/>
            <person name="Vettore A."/>
            <person name="Wassem R."/>
            <person name="Zaha A."/>
            <person name="Simpson A.J.G."/>
        </authorList>
    </citation>
    <scope>NUCLEOTIDE SEQUENCE [LARGE SCALE GENOMIC DNA]</scope>
    <source>
        <strain>ATCC 12472 / DSM 30191 / JCM 1249 / CCUG 213 / NBRC 12614 / NCIMB 9131 / NCTC 9757 / MK</strain>
    </source>
</reference>
<sequence>MAGMNTENENRVEALEVRLAFQDELLDALNATVARQQKEIDLLQQQIRLLYQQFRNAQPDDAPGGSLRDDIPPHY</sequence>
<name>SLYX_CHRVO</name>
<feature type="chain" id="PRO_0000227063" description="Protein SlyX homolog">
    <location>
        <begin position="1"/>
        <end position="75"/>
    </location>
</feature>
<accession>Q7P0W0</accession>
<protein>
    <recommendedName>
        <fullName evidence="1">Protein SlyX homolog</fullName>
    </recommendedName>
</protein>
<comment type="similarity">
    <text evidence="1">Belongs to the SlyX family.</text>
</comment>
<keyword id="KW-1185">Reference proteome</keyword>
<gene>
    <name evidence="1" type="primary">slyX</name>
    <name type="ordered locus">CV_0455</name>
</gene>